<feature type="chain" id="PRO_0000444929" description="Reducing polyketide synthase pksF">
    <location>
        <begin position="1"/>
        <end position="2260"/>
    </location>
</feature>
<feature type="domain" description="Ketosynthase family 3 (KS3)" evidence="4 9">
    <location>
        <begin position="20"/>
        <end position="445"/>
    </location>
</feature>
<feature type="domain" description="PKS/mFAS DH" evidence="5">
    <location>
        <begin position="984"/>
        <end position="1306"/>
    </location>
</feature>
<feature type="domain" description="Carrier" evidence="3 9">
    <location>
        <begin position="2174"/>
        <end position="2251"/>
    </location>
</feature>
<feature type="region of interest" description="Malonyl-CoA:ACP transacylase (MAT) domain" evidence="2 9">
    <location>
        <begin position="598"/>
        <end position="933"/>
    </location>
</feature>
<feature type="region of interest" description="Dehydratase (DH) domain" evidence="2 9">
    <location>
        <begin position="984"/>
        <end position="1281"/>
    </location>
</feature>
<feature type="region of interest" description="N-terminal hotdog fold" evidence="5">
    <location>
        <begin position="984"/>
        <end position="1121"/>
    </location>
</feature>
<feature type="region of interest" description="C-terminal hotdog fold" evidence="5">
    <location>
        <begin position="1150"/>
        <end position="1306"/>
    </location>
</feature>
<feature type="region of interest" description="Enoylreductase (ER) domain" evidence="2 9">
    <location>
        <begin position="1544"/>
        <end position="1859"/>
    </location>
</feature>
<feature type="region of interest" description="Ketoreductase (KR) domain" evidence="2 9">
    <location>
        <begin position="1882"/>
        <end position="2104"/>
    </location>
</feature>
<feature type="active site" description="For beta-ketoacyl synthase activity" evidence="4">
    <location>
        <position position="194"/>
    </location>
</feature>
<feature type="active site" description="For beta-ketoacyl synthase activity" evidence="4">
    <location>
        <position position="329"/>
    </location>
</feature>
<feature type="active site" description="For beta-ketoacyl synthase activity" evidence="4">
    <location>
        <position position="368"/>
    </location>
</feature>
<feature type="active site" description="For malonyltransferase activity" evidence="6">
    <location>
        <position position="689"/>
    </location>
</feature>
<feature type="active site" description="Proton acceptor; for dehydratase activity" evidence="5">
    <location>
        <position position="1016"/>
    </location>
</feature>
<feature type="active site" description="Proton donor; for dehydratase activity" evidence="5">
    <location>
        <position position="1216"/>
    </location>
</feature>
<feature type="modified residue" description="O-(pantetheine 4'-phosphoryl)serine" evidence="3">
    <location>
        <position position="2211"/>
    </location>
</feature>
<organism>
    <name type="scientific">Alternaria solani</name>
    <dbReference type="NCBI Taxonomy" id="48100"/>
    <lineage>
        <taxon>Eukaryota</taxon>
        <taxon>Fungi</taxon>
        <taxon>Dikarya</taxon>
        <taxon>Ascomycota</taxon>
        <taxon>Pezizomycotina</taxon>
        <taxon>Dothideomycetes</taxon>
        <taxon>Pleosporomycetidae</taxon>
        <taxon>Pleosporales</taxon>
        <taxon>Pleosporineae</taxon>
        <taxon>Pleosporaceae</taxon>
        <taxon>Alternaria</taxon>
        <taxon>Alternaria sect. Porri</taxon>
    </lineage>
</organism>
<dbReference type="EC" id="2.3.1.-" evidence="7"/>
<dbReference type="EMBL" id="AB234233">
    <property type="protein sequence ID" value="BAE80697.1"/>
    <property type="molecule type" value="Genomic_DNA"/>
</dbReference>
<dbReference type="SMR" id="Q2ABP6"/>
<dbReference type="GO" id="GO:0004312">
    <property type="term" value="F:fatty acid synthase activity"/>
    <property type="evidence" value="ECO:0007669"/>
    <property type="project" value="TreeGrafter"/>
</dbReference>
<dbReference type="GO" id="GO:0016491">
    <property type="term" value="F:oxidoreductase activity"/>
    <property type="evidence" value="ECO:0007669"/>
    <property type="project" value="UniProtKB-KW"/>
</dbReference>
<dbReference type="GO" id="GO:0031177">
    <property type="term" value="F:phosphopantetheine binding"/>
    <property type="evidence" value="ECO:0007669"/>
    <property type="project" value="InterPro"/>
</dbReference>
<dbReference type="GO" id="GO:0006633">
    <property type="term" value="P:fatty acid biosynthetic process"/>
    <property type="evidence" value="ECO:0007669"/>
    <property type="project" value="TreeGrafter"/>
</dbReference>
<dbReference type="GO" id="GO:0044550">
    <property type="term" value="P:secondary metabolite biosynthetic process"/>
    <property type="evidence" value="ECO:0007669"/>
    <property type="project" value="UniProtKB-ARBA"/>
</dbReference>
<dbReference type="CDD" id="cd05195">
    <property type="entry name" value="enoyl_red"/>
    <property type="match status" value="1"/>
</dbReference>
<dbReference type="CDD" id="cd00833">
    <property type="entry name" value="PKS"/>
    <property type="match status" value="1"/>
</dbReference>
<dbReference type="Gene3D" id="3.40.47.10">
    <property type="match status" value="1"/>
</dbReference>
<dbReference type="Gene3D" id="1.10.1200.10">
    <property type="entry name" value="ACP-like"/>
    <property type="match status" value="1"/>
</dbReference>
<dbReference type="Gene3D" id="3.40.366.10">
    <property type="entry name" value="Malonyl-Coenzyme A Acyl Carrier Protein, domain 2"/>
    <property type="match status" value="1"/>
</dbReference>
<dbReference type="Gene3D" id="3.90.180.10">
    <property type="entry name" value="Medium-chain alcohol dehydrogenases, catalytic domain"/>
    <property type="match status" value="1"/>
</dbReference>
<dbReference type="Gene3D" id="3.40.50.720">
    <property type="entry name" value="NAD(P)-binding Rossmann-like Domain"/>
    <property type="match status" value="2"/>
</dbReference>
<dbReference type="Gene3D" id="3.10.129.110">
    <property type="entry name" value="Polyketide synthase dehydratase"/>
    <property type="match status" value="1"/>
</dbReference>
<dbReference type="InterPro" id="IPR001227">
    <property type="entry name" value="Ac_transferase_dom_sf"/>
</dbReference>
<dbReference type="InterPro" id="IPR036736">
    <property type="entry name" value="ACP-like_sf"/>
</dbReference>
<dbReference type="InterPro" id="IPR014043">
    <property type="entry name" value="Acyl_transferase_dom"/>
</dbReference>
<dbReference type="InterPro" id="IPR016035">
    <property type="entry name" value="Acyl_Trfase/lysoPLipase"/>
</dbReference>
<dbReference type="InterPro" id="IPR013154">
    <property type="entry name" value="ADH-like_N"/>
</dbReference>
<dbReference type="InterPro" id="IPR011032">
    <property type="entry name" value="GroES-like_sf"/>
</dbReference>
<dbReference type="InterPro" id="IPR014031">
    <property type="entry name" value="Ketoacyl_synth_C"/>
</dbReference>
<dbReference type="InterPro" id="IPR014030">
    <property type="entry name" value="Ketoacyl_synth_N"/>
</dbReference>
<dbReference type="InterPro" id="IPR036291">
    <property type="entry name" value="NAD(P)-bd_dom_sf"/>
</dbReference>
<dbReference type="InterPro" id="IPR020841">
    <property type="entry name" value="PKS_Beta-ketoAc_synthase_dom"/>
</dbReference>
<dbReference type="InterPro" id="IPR042104">
    <property type="entry name" value="PKS_dehydratase_sf"/>
</dbReference>
<dbReference type="InterPro" id="IPR020807">
    <property type="entry name" value="PKS_DH"/>
</dbReference>
<dbReference type="InterPro" id="IPR049551">
    <property type="entry name" value="PKS_DH_C"/>
</dbReference>
<dbReference type="InterPro" id="IPR049552">
    <property type="entry name" value="PKS_DH_N"/>
</dbReference>
<dbReference type="InterPro" id="IPR020843">
    <property type="entry name" value="PKS_ER"/>
</dbReference>
<dbReference type="InterPro" id="IPR013968">
    <property type="entry name" value="PKS_KR"/>
</dbReference>
<dbReference type="InterPro" id="IPR049900">
    <property type="entry name" value="PKS_mFAS_DH"/>
</dbReference>
<dbReference type="InterPro" id="IPR050091">
    <property type="entry name" value="PKS_NRPS_Biosynth_Enz"/>
</dbReference>
<dbReference type="InterPro" id="IPR020806">
    <property type="entry name" value="PKS_PP-bd"/>
</dbReference>
<dbReference type="InterPro" id="IPR009081">
    <property type="entry name" value="PP-bd_ACP"/>
</dbReference>
<dbReference type="InterPro" id="IPR006162">
    <property type="entry name" value="Ppantetheine_attach_site"/>
</dbReference>
<dbReference type="InterPro" id="IPR016039">
    <property type="entry name" value="Thiolase-like"/>
</dbReference>
<dbReference type="PANTHER" id="PTHR43775:SF29">
    <property type="entry name" value="ASPERFURANONE POLYKETIDE SYNTHASE AFOG-RELATED"/>
    <property type="match status" value="1"/>
</dbReference>
<dbReference type="PANTHER" id="PTHR43775">
    <property type="entry name" value="FATTY ACID SYNTHASE"/>
    <property type="match status" value="1"/>
</dbReference>
<dbReference type="Pfam" id="PF23297">
    <property type="entry name" value="ACP_SdgA_C"/>
    <property type="match status" value="1"/>
</dbReference>
<dbReference type="Pfam" id="PF00698">
    <property type="entry name" value="Acyl_transf_1"/>
    <property type="match status" value="1"/>
</dbReference>
<dbReference type="Pfam" id="PF08240">
    <property type="entry name" value="ADH_N"/>
    <property type="match status" value="1"/>
</dbReference>
<dbReference type="Pfam" id="PF00109">
    <property type="entry name" value="ketoacyl-synt"/>
    <property type="match status" value="1"/>
</dbReference>
<dbReference type="Pfam" id="PF02801">
    <property type="entry name" value="Ketoacyl-synt_C"/>
    <property type="match status" value="1"/>
</dbReference>
<dbReference type="Pfam" id="PF08659">
    <property type="entry name" value="KR"/>
    <property type="match status" value="1"/>
</dbReference>
<dbReference type="Pfam" id="PF21089">
    <property type="entry name" value="PKS_DH_N"/>
    <property type="match status" value="1"/>
</dbReference>
<dbReference type="Pfam" id="PF14765">
    <property type="entry name" value="PS-DH"/>
    <property type="match status" value="1"/>
</dbReference>
<dbReference type="SMART" id="SM00827">
    <property type="entry name" value="PKS_AT"/>
    <property type="match status" value="1"/>
</dbReference>
<dbReference type="SMART" id="SM00826">
    <property type="entry name" value="PKS_DH"/>
    <property type="match status" value="1"/>
</dbReference>
<dbReference type="SMART" id="SM00829">
    <property type="entry name" value="PKS_ER"/>
    <property type="match status" value="1"/>
</dbReference>
<dbReference type="SMART" id="SM00822">
    <property type="entry name" value="PKS_KR"/>
    <property type="match status" value="1"/>
</dbReference>
<dbReference type="SMART" id="SM00825">
    <property type="entry name" value="PKS_KS"/>
    <property type="match status" value="1"/>
</dbReference>
<dbReference type="SMART" id="SM00823">
    <property type="entry name" value="PKS_PP"/>
    <property type="match status" value="1"/>
</dbReference>
<dbReference type="SUPFAM" id="SSF47336">
    <property type="entry name" value="ACP-like"/>
    <property type="match status" value="1"/>
</dbReference>
<dbReference type="SUPFAM" id="SSF52151">
    <property type="entry name" value="FabD/lysophospholipase-like"/>
    <property type="match status" value="1"/>
</dbReference>
<dbReference type="SUPFAM" id="SSF50129">
    <property type="entry name" value="GroES-like"/>
    <property type="match status" value="1"/>
</dbReference>
<dbReference type="SUPFAM" id="SSF51735">
    <property type="entry name" value="NAD(P)-binding Rossmann-fold domains"/>
    <property type="match status" value="2"/>
</dbReference>
<dbReference type="SUPFAM" id="SSF53901">
    <property type="entry name" value="Thiolase-like"/>
    <property type="match status" value="1"/>
</dbReference>
<dbReference type="PROSITE" id="PS50075">
    <property type="entry name" value="CARRIER"/>
    <property type="match status" value="1"/>
</dbReference>
<dbReference type="PROSITE" id="PS52004">
    <property type="entry name" value="KS3_2"/>
    <property type="match status" value="1"/>
</dbReference>
<dbReference type="PROSITE" id="PS00012">
    <property type="entry name" value="PHOSPHOPANTETHEINE"/>
    <property type="match status" value="1"/>
</dbReference>
<dbReference type="PROSITE" id="PS52019">
    <property type="entry name" value="PKS_MFAS_DH"/>
    <property type="match status" value="1"/>
</dbReference>
<proteinExistence type="evidence at protein level"/>
<evidence type="ECO:0000250" key="1">
    <source>
        <dbReference type="UniProtKB" id="Q9Y8A5"/>
    </source>
</evidence>
<evidence type="ECO:0000255" key="2"/>
<evidence type="ECO:0000255" key="3">
    <source>
        <dbReference type="PROSITE-ProRule" id="PRU00258"/>
    </source>
</evidence>
<evidence type="ECO:0000255" key="4">
    <source>
        <dbReference type="PROSITE-ProRule" id="PRU01348"/>
    </source>
</evidence>
<evidence type="ECO:0000255" key="5">
    <source>
        <dbReference type="PROSITE-ProRule" id="PRU01363"/>
    </source>
</evidence>
<evidence type="ECO:0000255" key="6">
    <source>
        <dbReference type="PROSITE-ProRule" id="PRU10022"/>
    </source>
</evidence>
<evidence type="ECO:0000269" key="7">
    <source>
    </source>
</evidence>
<evidence type="ECO:0000303" key="8">
    <source>
    </source>
</evidence>
<evidence type="ECO:0000305" key="9">
    <source>
    </source>
</evidence>
<protein>
    <recommendedName>
        <fullName evidence="8">Reducing polyketide synthase pksF</fullName>
        <shortName evidence="8">RD-PKS F</shortName>
        <ecNumber evidence="7">2.3.1.-</ecNumber>
    </recommendedName>
    <alternativeName>
        <fullName evidence="9">Aslaniol synthase</fullName>
    </alternativeName>
    <alternativeName>
        <fullName evidence="9">Aslanipyrone synthase</fullName>
    </alternativeName>
</protein>
<comment type="function">
    <text evidence="7">Reducing polyketide synthase that catalyzes the formation of a C22 intermediate attached to the ACP. Release by intramolecular hydrolysis by the enolized delta-carbonyl would give the pyrone product aslanipyrone (PubMed:16642517). Alternatively, KR-mediated reduction of the beta-carbonyl of the C22 intermediate would form a beta-hydroxy thioester intermediate, which could be a substrate for a further KS-mediated condensation of an additional C2 unit to form a C24 intermediate, which cyclizes by aldol condensation followed by decarboxylation to form aslaniol (PubMed:16642517). Neither aslanipyrone, aslaniol, nor their derivatives have been detected in A.solani, probably due to a low abundance and/or extensive post-PKS modification. It is assumed that the branching point from C22 to C24 is the result of KR activity on the C22 intermediate anchored to the ACP (PubMed:16642517).</text>
</comment>
<comment type="cofactor">
    <cofactor evidence="1">
        <name>pantetheine 4'-phosphate</name>
        <dbReference type="ChEBI" id="CHEBI:47942"/>
    </cofactor>
    <text evidence="1">Binds 1 phosphopantetheine covalently.</text>
</comment>
<comment type="domain">
    <text evidence="9">Multidomain protein; including a ketosynthase (KS) that catalyzes repeated decarboxylative condensation to elongate the polyketide backbone; a malonyl-CoA:ACP transacylase (MAT) that selects and transfers the extender unit malonyl-CoA; a dehydratase (DH) domain that reduces hydroxyl groups to enoyl groups; an enoylreductase (ER) domain that reduces enoyl groups to alkyl group; a ketoreductase (KR) domain that catalyzes beta-ketoreduction steps; and an acyl-carrier protein (ACP) that serves as the tether of the growing and completed polyketide via its phosphopantetheinyl arm (Probable). The ER domain was found to be much shorter than those of other fungal RD-PKSs, and in its nucleotide-binding domain (G/AxGxxG), the second glycine is replaced by a serine residue. This suggests that this domain is non-functional and is consistent with the absence of reduction of the double bonds formed by the DH domain in the PKSF products (Probable).</text>
</comment>
<keyword id="KW-0012">Acyltransferase</keyword>
<keyword id="KW-0511">Multifunctional enzyme</keyword>
<keyword id="KW-0521">NADP</keyword>
<keyword id="KW-0560">Oxidoreductase</keyword>
<keyword id="KW-0596">Phosphopantetheine</keyword>
<keyword id="KW-0597">Phosphoprotein</keyword>
<keyword id="KW-0808">Transferase</keyword>
<sequence length="2260" mass="247331">MDAFIDSEEVPMSSSSPNRVEPIAIVGFGFKFPQDITNAESFWKLLIERRSTMTEIPKNRWNIDGFYKEHGHRPGTVKNRGGHFLADDPARFDAPFFSIQPAEAECMDPQQRLLLETSYHALENAGIPMQAAMGTRTSVHVGCLLQEYSQISQRDAQMPGDYRIVGSSGLAMLANRLSWFYDFSGPSMTVDTACSGGLVAFHLACQELSAGSVDMSLVCGNNLCLLPDSTALLSSLNMMSKDSVCYSFDERASGYARGEGFGVLILKRLATAIADGDTIRGVVRSTGCGQDGNTPSITSPSQSAQERLIRETYARAGLDLGHTRYFEAHGTGTPVGDPCEAAAISNVFSCRTPKDPIFVGALKSNMGHPEGASGIAGVIKTLLVLEKGIIPPNVYPERINPAVAAAGPNLKFPLVPATWPTDGIRRASVNSFGYGGTNAHVVLDDALSFLRDHGLSGRHCTEILHASEGATKPAIFDALAINGEDGSYSTDTSACSEFFADNTPPDSMDDHETAPKLFILSAFDERATQRSISTFENWMRNHANDENDRQLLNDVAYTLAEKRTSFPWKSVCVALPNSLSQLSWSAPARARQRVNLCFVFTGQGAQWHGMGRELMIYPPFRDAMLRADRYFKSLGSAWSLIDELYLTSKEDSVIHQPELSQPICTALQMAIHDLLTSWRVCASISVGHSSGEIAAAYASRAISQESAWMIAYFRGLAVAIAQALNPSPGAMIAVQAPLKLGNTSWTSRMQNIRPISSLSACYNSPTSFTLSGSHSMLHQLAITLKQANIEVHILKIDVAYHSHYMKPVAGVYEKLLRTIEPGEQVEAQPSFVSTVTGKNVQQLNALRTSEYWQQNLCGSVKFSATLQSICARQDASTLFFVEIGPHSVLRSPLGDILKESGRDVAIDYSSVLRRDRAADITALECAGKLHTIGASIDITEVNKESEKSPRFLPSLPSYQFEDKKKYWLEGRTSIQYRQTQFVHHELLGSRTPDWNEHEARWTNRILLDQSPYLHDHQINGLCLMPAAGMLTMAIEATRQYYGHRAENASGYKLKDVTFTKAMTLSADARGTEIQLTLRPAAAESRDVQPGSLWNQFSLFVHEDGGWHLCCKGYVAIEYDDRRESSGELAESATAMEEKKQAFLAASQECRIAIDSADIYGAFGQAGLTYGPTFKGMRNVKWDQRNQATGTIGLRDWQRHAKFSYSDPHFIHPAALDTILQTTFPAYSIYAKDSSATTVPTGFSNAWFSVKLMRDPSDPQDVVVHAKVAGRGFRNKLFSITAAFANTQELCFYGDLETSTIGRNSPSADNTEVPRSLYRIDWQPAEFHRPTAVSPPSALSKSCIHIIYDDSEPLQSELMQALRRTMSAQDDVGVALVTWSSVSQHELDNATCVFLPGLDGNLLRRMQEDGLANIKSLLLKASTLIWITFQHQTIDQSPTEGLVSGLVRTLATESEDYRLVSVSLNPETGLDTVATNITKVATALLEPQDDPEDEYCEIDGRLCTPRVVDDAELTVQALSTKDTAVSITKPWSELDSPKLTIGAAGILKTLHYEQTSIQMDELASDDVVIQVKAVGLNTRDALVALGQVHDESFGSEIAGVVVNTGSSHDAGFQIGDRVFGVTRGGVAQLARCKASQLQRVPDRMSFCEAAAYPVAFCTAYYVLTQYCGTNSGDSILVHDAASVLGQAIIKIAAIHGYTKIFATVSSAGGAHFLENSLHVPKSNIFSTDSLDFQHGIRHLTNGEGVAVVVGSEDHLQDSWPCIAPFGRFVGVGEKDVFHSTANGSKEIVLPPTTKNIAFVSVSFQDLAESYMFKDIFKHALMLIEDAQVTMALPPTVFKQSEIEPALRRLTDVDVVEKIVIEMDSDEVVEMEPAQNSTKPLFRPDASYLIAGAFGGIGQSIARWMVQHGAKLLILPSRSPVEGTGSERDHFVQELKAQGAEVYAPVCDIADHDQLRKMLVSFSHLPAVKGCIQAAMVMRDSSFAKMTIEQWHQSLAPKVDGSWNLHRLLPLGLDFFVMLSSSTGIMGSFGQSNYTVGNTYQDTLAAHRMRHGQRAHALALSMVTGVGYVAQNDQVQALLRVRGMLEEVPMEDIYNLLRFCCDPDRVDASTVGSQIITPLTLPADLRAMGIVAPLGSTRPIYHYLDTLPSRLSSDTASAEAKNRPSYKLSEATSLVQATDIVVEAIQTQLSSLLVVSKDDIDSQRAIYRYGVDSLVAVEMRNWFSKAIGADVGTADIMSDISIWLLAVKVAGKSKFVRNELKE</sequence>
<accession>Q2ABP6</accession>
<reference key="1">
    <citation type="journal article" date="2006" name="ChemBioChem">
        <title>Expression of Alternaria solani PKSF generates a set of complex reduced-type polyketides with different carbon-lengths and cyclization.</title>
        <authorList>
            <person name="Kasahara K."/>
            <person name="Fujii I."/>
            <person name="Oikawa H."/>
            <person name="Ebizuka Y."/>
        </authorList>
    </citation>
    <scope>NUCLEOTIDE SEQUENCE [GENOMIC DNA]</scope>
    <scope>FUNCTION</scope>
    <scope>DOMAIN</scope>
    <scope>CATALYTIC ACTIVITY</scope>
</reference>
<gene>
    <name evidence="8" type="primary">pksF</name>
</gene>
<name>PKSF_ALTSO</name>